<reference key="1">
    <citation type="journal article" date="2005" name="Science">
        <title>The transcriptional landscape of the mammalian genome.</title>
        <authorList>
            <person name="Carninci P."/>
            <person name="Kasukawa T."/>
            <person name="Katayama S."/>
            <person name="Gough J."/>
            <person name="Frith M.C."/>
            <person name="Maeda N."/>
            <person name="Oyama R."/>
            <person name="Ravasi T."/>
            <person name="Lenhard B."/>
            <person name="Wells C."/>
            <person name="Kodzius R."/>
            <person name="Shimokawa K."/>
            <person name="Bajic V.B."/>
            <person name="Brenner S.E."/>
            <person name="Batalov S."/>
            <person name="Forrest A.R."/>
            <person name="Zavolan M."/>
            <person name="Davis M.J."/>
            <person name="Wilming L.G."/>
            <person name="Aidinis V."/>
            <person name="Allen J.E."/>
            <person name="Ambesi-Impiombato A."/>
            <person name="Apweiler R."/>
            <person name="Aturaliya R.N."/>
            <person name="Bailey T.L."/>
            <person name="Bansal M."/>
            <person name="Baxter L."/>
            <person name="Beisel K.W."/>
            <person name="Bersano T."/>
            <person name="Bono H."/>
            <person name="Chalk A.M."/>
            <person name="Chiu K.P."/>
            <person name="Choudhary V."/>
            <person name="Christoffels A."/>
            <person name="Clutterbuck D.R."/>
            <person name="Crowe M.L."/>
            <person name="Dalla E."/>
            <person name="Dalrymple B.P."/>
            <person name="de Bono B."/>
            <person name="Della Gatta G."/>
            <person name="di Bernardo D."/>
            <person name="Down T."/>
            <person name="Engstrom P."/>
            <person name="Fagiolini M."/>
            <person name="Faulkner G."/>
            <person name="Fletcher C.F."/>
            <person name="Fukushima T."/>
            <person name="Furuno M."/>
            <person name="Futaki S."/>
            <person name="Gariboldi M."/>
            <person name="Georgii-Hemming P."/>
            <person name="Gingeras T.R."/>
            <person name="Gojobori T."/>
            <person name="Green R.E."/>
            <person name="Gustincich S."/>
            <person name="Harbers M."/>
            <person name="Hayashi Y."/>
            <person name="Hensch T.K."/>
            <person name="Hirokawa N."/>
            <person name="Hill D."/>
            <person name="Huminiecki L."/>
            <person name="Iacono M."/>
            <person name="Ikeo K."/>
            <person name="Iwama A."/>
            <person name="Ishikawa T."/>
            <person name="Jakt M."/>
            <person name="Kanapin A."/>
            <person name="Katoh M."/>
            <person name="Kawasawa Y."/>
            <person name="Kelso J."/>
            <person name="Kitamura H."/>
            <person name="Kitano H."/>
            <person name="Kollias G."/>
            <person name="Krishnan S.P."/>
            <person name="Kruger A."/>
            <person name="Kummerfeld S.K."/>
            <person name="Kurochkin I.V."/>
            <person name="Lareau L.F."/>
            <person name="Lazarevic D."/>
            <person name="Lipovich L."/>
            <person name="Liu J."/>
            <person name="Liuni S."/>
            <person name="McWilliam S."/>
            <person name="Madan Babu M."/>
            <person name="Madera M."/>
            <person name="Marchionni L."/>
            <person name="Matsuda H."/>
            <person name="Matsuzawa S."/>
            <person name="Miki H."/>
            <person name="Mignone F."/>
            <person name="Miyake S."/>
            <person name="Morris K."/>
            <person name="Mottagui-Tabar S."/>
            <person name="Mulder N."/>
            <person name="Nakano N."/>
            <person name="Nakauchi H."/>
            <person name="Ng P."/>
            <person name="Nilsson R."/>
            <person name="Nishiguchi S."/>
            <person name="Nishikawa S."/>
            <person name="Nori F."/>
            <person name="Ohara O."/>
            <person name="Okazaki Y."/>
            <person name="Orlando V."/>
            <person name="Pang K.C."/>
            <person name="Pavan W.J."/>
            <person name="Pavesi G."/>
            <person name="Pesole G."/>
            <person name="Petrovsky N."/>
            <person name="Piazza S."/>
            <person name="Reed J."/>
            <person name="Reid J.F."/>
            <person name="Ring B.Z."/>
            <person name="Ringwald M."/>
            <person name="Rost B."/>
            <person name="Ruan Y."/>
            <person name="Salzberg S.L."/>
            <person name="Sandelin A."/>
            <person name="Schneider C."/>
            <person name="Schoenbach C."/>
            <person name="Sekiguchi K."/>
            <person name="Semple C.A."/>
            <person name="Seno S."/>
            <person name="Sessa L."/>
            <person name="Sheng Y."/>
            <person name="Shibata Y."/>
            <person name="Shimada H."/>
            <person name="Shimada K."/>
            <person name="Silva D."/>
            <person name="Sinclair B."/>
            <person name="Sperling S."/>
            <person name="Stupka E."/>
            <person name="Sugiura K."/>
            <person name="Sultana R."/>
            <person name="Takenaka Y."/>
            <person name="Taki K."/>
            <person name="Tammoja K."/>
            <person name="Tan S.L."/>
            <person name="Tang S."/>
            <person name="Taylor M.S."/>
            <person name="Tegner J."/>
            <person name="Teichmann S.A."/>
            <person name="Ueda H.R."/>
            <person name="van Nimwegen E."/>
            <person name="Verardo R."/>
            <person name="Wei C.L."/>
            <person name="Yagi K."/>
            <person name="Yamanishi H."/>
            <person name="Zabarovsky E."/>
            <person name="Zhu S."/>
            <person name="Zimmer A."/>
            <person name="Hide W."/>
            <person name="Bult C."/>
            <person name="Grimmond S.M."/>
            <person name="Teasdale R.D."/>
            <person name="Liu E.T."/>
            <person name="Brusic V."/>
            <person name="Quackenbush J."/>
            <person name="Wahlestedt C."/>
            <person name="Mattick J.S."/>
            <person name="Hume D.A."/>
            <person name="Kai C."/>
            <person name="Sasaki D."/>
            <person name="Tomaru Y."/>
            <person name="Fukuda S."/>
            <person name="Kanamori-Katayama M."/>
            <person name="Suzuki M."/>
            <person name="Aoki J."/>
            <person name="Arakawa T."/>
            <person name="Iida J."/>
            <person name="Imamura K."/>
            <person name="Itoh M."/>
            <person name="Kato T."/>
            <person name="Kawaji H."/>
            <person name="Kawagashira N."/>
            <person name="Kawashima T."/>
            <person name="Kojima M."/>
            <person name="Kondo S."/>
            <person name="Konno H."/>
            <person name="Nakano K."/>
            <person name="Ninomiya N."/>
            <person name="Nishio T."/>
            <person name="Okada M."/>
            <person name="Plessy C."/>
            <person name="Shibata K."/>
            <person name="Shiraki T."/>
            <person name="Suzuki S."/>
            <person name="Tagami M."/>
            <person name="Waki K."/>
            <person name="Watahiki A."/>
            <person name="Okamura-Oho Y."/>
            <person name="Suzuki H."/>
            <person name="Kawai J."/>
            <person name="Hayashizaki Y."/>
        </authorList>
    </citation>
    <scope>NUCLEOTIDE SEQUENCE [LARGE SCALE MRNA] (ISOFORM 2)</scope>
    <source>
        <strain>C57BL/6J</strain>
        <tissue>Head</tissue>
    </source>
</reference>
<reference key="2">
    <citation type="journal article" date="2004" name="Genome Res.">
        <title>The status, quality, and expansion of the NIH full-length cDNA project: the Mammalian Gene Collection (MGC).</title>
        <authorList>
            <consortium name="The MGC Project Team"/>
        </authorList>
    </citation>
    <scope>NUCLEOTIDE SEQUENCE [LARGE SCALE MRNA] (ISOFORM 1)</scope>
</reference>
<evidence type="ECO:0000250" key="1">
    <source>
        <dbReference type="UniProtKB" id="Q7Z6Z6"/>
    </source>
</evidence>
<evidence type="ECO:0000255" key="2">
    <source>
        <dbReference type="PROSITE-ProRule" id="PRU01161"/>
    </source>
</evidence>
<evidence type="ECO:0000256" key="3">
    <source>
        <dbReference type="SAM" id="MobiDB-lite"/>
    </source>
</evidence>
<evidence type="ECO:0000303" key="4">
    <source>
    </source>
</evidence>
<evidence type="ECO:0000305" key="5"/>
<evidence type="ECO:0000312" key="6">
    <source>
        <dbReference type="MGI" id="MGI:1923022"/>
    </source>
</evidence>
<comment type="function">
    <text evidence="1">Has abundant triacylglycerol lipase activity.</text>
</comment>
<comment type="catalytic activity">
    <reaction evidence="1">
        <text>a triacylglycerol + H2O = a diacylglycerol + a fatty acid + H(+)</text>
        <dbReference type="Rhea" id="RHEA:12044"/>
        <dbReference type="ChEBI" id="CHEBI:15377"/>
        <dbReference type="ChEBI" id="CHEBI:15378"/>
        <dbReference type="ChEBI" id="CHEBI:17855"/>
        <dbReference type="ChEBI" id="CHEBI:18035"/>
        <dbReference type="ChEBI" id="CHEBI:28868"/>
        <dbReference type="EC" id="3.1.1.3"/>
    </reaction>
    <physiologicalReaction direction="left-to-right" evidence="1">
        <dbReference type="Rhea" id="RHEA:12045"/>
    </physiologicalReaction>
</comment>
<comment type="alternative products">
    <event type="alternative splicing"/>
    <isoform>
        <id>Q32LZ8-1</id>
        <name>1</name>
        <sequence type="displayed"/>
    </isoform>
    <isoform>
        <id>Q32LZ8-2</id>
        <name>2</name>
        <sequence type="described" ref="VSP_026374"/>
    </isoform>
</comment>
<name>PLPL5_MOUSE</name>
<gene>
    <name evidence="6" type="primary">Pnpla5</name>
</gene>
<proteinExistence type="evidence at transcript level"/>
<organism>
    <name type="scientific">Mus musculus</name>
    <name type="common">Mouse</name>
    <dbReference type="NCBI Taxonomy" id="10090"/>
    <lineage>
        <taxon>Eukaryota</taxon>
        <taxon>Metazoa</taxon>
        <taxon>Chordata</taxon>
        <taxon>Craniata</taxon>
        <taxon>Vertebrata</taxon>
        <taxon>Euteleostomi</taxon>
        <taxon>Mammalia</taxon>
        <taxon>Eutheria</taxon>
        <taxon>Euarchontoglires</taxon>
        <taxon>Glires</taxon>
        <taxon>Rodentia</taxon>
        <taxon>Myomorpha</taxon>
        <taxon>Muroidea</taxon>
        <taxon>Muridae</taxon>
        <taxon>Murinae</taxon>
        <taxon>Mus</taxon>
        <taxon>Mus</taxon>
    </lineage>
</organism>
<feature type="chain" id="PRO_0000292022" description="Patatin-like phospholipase domain-containing protein 5">
    <location>
        <begin position="1"/>
        <end position="432"/>
    </location>
</feature>
<feature type="domain" description="PNPLA" evidence="2">
    <location>
        <begin position="12"/>
        <end position="181"/>
    </location>
</feature>
<feature type="region of interest" description="Disordered" evidence="3">
    <location>
        <begin position="404"/>
        <end position="423"/>
    </location>
</feature>
<feature type="short sequence motif" description="GXGXXG" evidence="2">
    <location>
        <begin position="16"/>
        <end position="21"/>
    </location>
</feature>
<feature type="short sequence motif" description="GXSXG" evidence="2">
    <location>
        <begin position="47"/>
        <end position="51"/>
    </location>
</feature>
<feature type="short sequence motif" description="DGA/G" evidence="2">
    <location>
        <begin position="168"/>
        <end position="170"/>
    </location>
</feature>
<feature type="active site" description="Nucleophile" evidence="2">
    <location>
        <position position="49"/>
    </location>
</feature>
<feature type="active site" description="Proton acceptor" evidence="2">
    <location>
        <position position="168"/>
    </location>
</feature>
<feature type="splice variant" id="VSP_026374" description="In isoform 2." evidence="4">
    <original>WFPGMD</original>
    <variation>FADCALG</variation>
    <location>
        <begin position="427"/>
        <end position="432"/>
    </location>
</feature>
<dbReference type="EC" id="3.1.1.3" evidence="1"/>
<dbReference type="EMBL" id="AK014771">
    <property type="protein sequence ID" value="BAB29543.1"/>
    <property type="molecule type" value="mRNA"/>
</dbReference>
<dbReference type="EMBL" id="BC109360">
    <property type="protein sequence ID" value="AAI09361.1"/>
    <property type="molecule type" value="mRNA"/>
</dbReference>
<dbReference type="EMBL" id="BC109361">
    <property type="protein sequence ID" value="AAI09362.1"/>
    <property type="molecule type" value="mRNA"/>
</dbReference>
<dbReference type="CCDS" id="CCDS49685.1">
    <molecule id="Q32LZ8-1"/>
</dbReference>
<dbReference type="RefSeq" id="NP_083703.1">
    <molecule id="Q32LZ8-1"/>
    <property type="nucleotide sequence ID" value="NM_029427.1"/>
</dbReference>
<dbReference type="RefSeq" id="XP_006521583.1">
    <property type="nucleotide sequence ID" value="XM_006521520.2"/>
</dbReference>
<dbReference type="RefSeq" id="XP_036015516.1">
    <molecule id="Q32LZ8-2"/>
    <property type="nucleotide sequence ID" value="XM_036159623.1"/>
</dbReference>
<dbReference type="FunCoup" id="Q32LZ8">
    <property type="interactions" value="3"/>
</dbReference>
<dbReference type="STRING" id="10090.ENSMUSP00000019012"/>
<dbReference type="iPTMnet" id="Q32LZ8"/>
<dbReference type="PhosphoSitePlus" id="Q32LZ8"/>
<dbReference type="PaxDb" id="10090-ENSMUSP00000019012"/>
<dbReference type="ProteomicsDB" id="289765">
    <molecule id="Q32LZ8-1"/>
</dbReference>
<dbReference type="ProteomicsDB" id="289766">
    <molecule id="Q32LZ8-2"/>
</dbReference>
<dbReference type="Antibodypedia" id="27565">
    <property type="antibodies" value="84 antibodies from 16 providers"/>
</dbReference>
<dbReference type="Ensembl" id="ENSMUST00000019012.4">
    <molecule id="Q32LZ8-1"/>
    <property type="protein sequence ID" value="ENSMUSP00000019012.4"/>
    <property type="gene ID" value="ENSMUSG00000018868.5"/>
</dbReference>
<dbReference type="Ensembl" id="ENSMUST00000230566.2">
    <molecule id="Q32LZ8-2"/>
    <property type="protein sequence ID" value="ENSMUSP00000155268.2"/>
    <property type="gene ID" value="ENSMUSG00000018868.5"/>
</dbReference>
<dbReference type="GeneID" id="75772"/>
<dbReference type="KEGG" id="mmu:75772"/>
<dbReference type="UCSC" id="uc007xbu.1">
    <molecule id="Q32LZ8-2"/>
    <property type="organism name" value="mouse"/>
</dbReference>
<dbReference type="UCSC" id="uc007xbv.1">
    <molecule id="Q32LZ8-1"/>
    <property type="organism name" value="mouse"/>
</dbReference>
<dbReference type="AGR" id="MGI:1923022"/>
<dbReference type="CTD" id="150379"/>
<dbReference type="MGI" id="MGI:1923022">
    <property type="gene designation" value="Pnpla5"/>
</dbReference>
<dbReference type="VEuPathDB" id="HostDB:ENSMUSG00000018868"/>
<dbReference type="eggNOG" id="KOG3773">
    <property type="taxonomic scope" value="Eukaryota"/>
</dbReference>
<dbReference type="GeneTree" id="ENSGT00940000162116"/>
<dbReference type="HOGENOM" id="CLU_018371_0_1_1"/>
<dbReference type="InParanoid" id="Q32LZ8"/>
<dbReference type="OMA" id="SLNWAVP"/>
<dbReference type="PhylomeDB" id="Q32LZ8"/>
<dbReference type="TreeFam" id="TF314272"/>
<dbReference type="Reactome" id="R-MMU-163560">
    <property type="pathway name" value="Triglyceride catabolism"/>
</dbReference>
<dbReference type="BioGRID-ORCS" id="75772">
    <property type="hits" value="2 hits in 82 CRISPR screens"/>
</dbReference>
<dbReference type="PRO" id="PR:Q32LZ8"/>
<dbReference type="Proteomes" id="UP000000589">
    <property type="component" value="Chromosome 15"/>
</dbReference>
<dbReference type="RNAct" id="Q32LZ8">
    <property type="molecule type" value="protein"/>
</dbReference>
<dbReference type="Bgee" id="ENSMUSG00000018868">
    <property type="expression patterns" value="Expressed in lip and 19 other cell types or tissues"/>
</dbReference>
<dbReference type="GO" id="GO:0004806">
    <property type="term" value="F:triacylglycerol lipase activity"/>
    <property type="evidence" value="ECO:0007669"/>
    <property type="project" value="UniProtKB-EC"/>
</dbReference>
<dbReference type="GO" id="GO:0016042">
    <property type="term" value="P:lipid catabolic process"/>
    <property type="evidence" value="ECO:0007669"/>
    <property type="project" value="UniProtKB-KW"/>
</dbReference>
<dbReference type="CDD" id="cd07223">
    <property type="entry name" value="Pat_PNPLA5-mammals"/>
    <property type="match status" value="1"/>
</dbReference>
<dbReference type="FunFam" id="3.40.1090.10:FF:000027">
    <property type="entry name" value="Patatin like phospholipase domain containing 5"/>
    <property type="match status" value="1"/>
</dbReference>
<dbReference type="FunFam" id="3.40.1090.10:FF:000003">
    <property type="entry name" value="Patatin-like phospholipase domain-containing protein 2"/>
    <property type="match status" value="1"/>
</dbReference>
<dbReference type="Gene3D" id="3.40.1090.10">
    <property type="entry name" value="Cytosolic phospholipase A2 catalytic domain"/>
    <property type="match status" value="2"/>
</dbReference>
<dbReference type="InterPro" id="IPR016035">
    <property type="entry name" value="Acyl_Trfase/lysoPLipase"/>
</dbReference>
<dbReference type="InterPro" id="IPR033562">
    <property type="entry name" value="PLPL"/>
</dbReference>
<dbReference type="InterPro" id="IPR002641">
    <property type="entry name" value="PNPLA_dom"/>
</dbReference>
<dbReference type="PANTHER" id="PTHR12406">
    <property type="entry name" value="CALCIUM-INDEPENDENT PHOSPHOLIPASE A2 IPLA2 -RELATED"/>
    <property type="match status" value="1"/>
</dbReference>
<dbReference type="PANTHER" id="PTHR12406:SF4">
    <property type="entry name" value="PATATIN-LIKE PHOSPHOLIPASE DOMAIN-CONTAINING PROTEIN 5"/>
    <property type="match status" value="1"/>
</dbReference>
<dbReference type="Pfam" id="PF01734">
    <property type="entry name" value="Patatin"/>
    <property type="match status" value="1"/>
</dbReference>
<dbReference type="SUPFAM" id="SSF52151">
    <property type="entry name" value="FabD/lysophospholipase-like"/>
    <property type="match status" value="1"/>
</dbReference>
<dbReference type="PROSITE" id="PS51635">
    <property type="entry name" value="PNPLA"/>
    <property type="match status" value="1"/>
</dbReference>
<accession>Q32LZ8</accession>
<accession>Q9D603</accession>
<keyword id="KW-0025">Alternative splicing</keyword>
<keyword id="KW-0378">Hydrolase</keyword>
<keyword id="KW-0442">Lipid degradation</keyword>
<keyword id="KW-0443">Lipid metabolism</keyword>
<keyword id="KW-1185">Reference proteome</keyword>
<protein>
    <recommendedName>
        <fullName evidence="5">Patatin-like phospholipase domain-containing protein 5</fullName>
        <ecNumber evidence="1">3.1.1.3</ecNumber>
    </recommendedName>
</protein>
<sequence length="432" mass="48480">MDFLEAEGGWNLSFSGSGYMGLYHVGVTQCLRQRAPRLIQGARRFYGSSSGALNAMAIVFGKSADFACSNLLDLVKLVERLSLGIFHPAYGPAEHIRKKLYENLPDNCHILASQRLGISMTRWPDGKNFIVTDFATRDEFIQALICTLYLPLYCGVIPPAFRGQRFIDGALSNNLPFSDCPTTITVSPFNGTVDICPQNISHSLFELTAFNASFQISTRNFFRGLKSVFPPKPEVVADHCRQGYLDALRFLERRGLTKEPVLWSLVSKEPPALVEGPRGTGHDQGQKTGPTVRWDIPNVLVKDVPNFELLSPELEAALRKACKRDFWTRVQCSVPGKVLAYLLLPCTLPFEYAYFRSRRLMEWLPEAPDDLDWMRSILKSTTLEVYSMAKSWLLRLGSPPGTRADSGLLRQQRGTAPSGNRPLNHRWFPGMD</sequence>